<evidence type="ECO:0000250" key="1">
    <source>
        <dbReference type="UniProtKB" id="P02086"/>
    </source>
</evidence>
<evidence type="ECO:0000250" key="2">
    <source>
        <dbReference type="UniProtKB" id="P68871"/>
    </source>
</evidence>
<evidence type="ECO:0000255" key="3">
    <source>
        <dbReference type="PROSITE-ProRule" id="PRU00238"/>
    </source>
</evidence>
<gene>
    <name type="primary">HBB</name>
</gene>
<proteinExistence type="evidence at protein level"/>
<feature type="chain" id="PRO_0000053013" description="Hemoglobin subunit beta">
    <location>
        <begin position="1"/>
        <end position="146"/>
    </location>
</feature>
<feature type="domain" description="Globin" evidence="3">
    <location>
        <begin position="2"/>
        <end position="146"/>
    </location>
</feature>
<feature type="binding site" description="distal binding residue">
    <location>
        <position position="63"/>
    </location>
    <ligand>
        <name>heme b</name>
        <dbReference type="ChEBI" id="CHEBI:60344"/>
    </ligand>
    <ligandPart>
        <name>Fe</name>
        <dbReference type="ChEBI" id="CHEBI:18248"/>
    </ligandPart>
</feature>
<feature type="binding site" description="proximal binding residue">
    <location>
        <position position="92"/>
    </location>
    <ligand>
        <name>heme b</name>
        <dbReference type="ChEBI" id="CHEBI:60344"/>
    </ligand>
    <ligandPart>
        <name>Fe</name>
        <dbReference type="ChEBI" id="CHEBI:18248"/>
    </ligandPart>
</feature>
<feature type="modified residue" description="N-acetylvaline" evidence="1">
    <location>
        <position position="1"/>
    </location>
</feature>
<feature type="modified residue" description="Phosphothreonine" evidence="2">
    <location>
        <position position="12"/>
    </location>
</feature>
<feature type="modified residue" description="Phosphoserine" evidence="2">
    <location>
        <position position="44"/>
    </location>
</feature>
<feature type="modified residue" description="N6-acetyllysine" evidence="2">
    <location>
        <position position="59"/>
    </location>
</feature>
<feature type="modified residue" description="N6-acetyllysine" evidence="2">
    <location>
        <position position="82"/>
    </location>
</feature>
<feature type="modified residue" description="S-nitrosocysteine" evidence="2">
    <location>
        <position position="93"/>
    </location>
</feature>
<feature type="modified residue" description="N6-acetyllysine" evidence="2">
    <location>
        <position position="144"/>
    </location>
</feature>
<sequence>VHLTAEEKAAVTALWGKVNVDEVGGEALGRLLVVYPWTQRFFDSFGDLSSPDAVMGNPKVKAHGKKVLNSFSEGLKNLDNLKGTFAKLSELHCDKLHVDPENFKLLGNVLVCVLAHHFGKEFTPQVQAAYQKVVAGVANALAHKYH</sequence>
<accession>P15449</accession>
<protein>
    <recommendedName>
        <fullName>Hemoglobin subunit beta</fullName>
    </recommendedName>
    <alternativeName>
        <fullName>Beta-globin</fullName>
    </alternativeName>
    <alternativeName>
        <fullName>Hemoglobin beta chain</fullName>
    </alternativeName>
</protein>
<organism>
    <name type="scientific">Mellivora capensis</name>
    <name type="common">Ratel</name>
    <name type="synonym">Honey badger</name>
    <dbReference type="NCBI Taxonomy" id="9664"/>
    <lineage>
        <taxon>Eukaryota</taxon>
        <taxon>Metazoa</taxon>
        <taxon>Chordata</taxon>
        <taxon>Craniata</taxon>
        <taxon>Vertebrata</taxon>
        <taxon>Euteleostomi</taxon>
        <taxon>Mammalia</taxon>
        <taxon>Eutheria</taxon>
        <taxon>Laurasiatheria</taxon>
        <taxon>Carnivora</taxon>
        <taxon>Caniformia</taxon>
        <taxon>Musteloidea</taxon>
        <taxon>Mustelidae</taxon>
        <taxon>Mellivoriane</taxon>
        <taxon>Mellivora</taxon>
    </lineage>
</organism>
<name>HBB_MELCA</name>
<dbReference type="PIR" id="S01663">
    <property type="entry name" value="HBBDR"/>
</dbReference>
<dbReference type="SMR" id="P15449"/>
<dbReference type="GO" id="GO:0072562">
    <property type="term" value="C:blood microparticle"/>
    <property type="evidence" value="ECO:0007669"/>
    <property type="project" value="TreeGrafter"/>
</dbReference>
<dbReference type="GO" id="GO:0031838">
    <property type="term" value="C:haptoglobin-hemoglobin complex"/>
    <property type="evidence" value="ECO:0007669"/>
    <property type="project" value="TreeGrafter"/>
</dbReference>
<dbReference type="GO" id="GO:0005833">
    <property type="term" value="C:hemoglobin complex"/>
    <property type="evidence" value="ECO:0007669"/>
    <property type="project" value="InterPro"/>
</dbReference>
<dbReference type="GO" id="GO:0031720">
    <property type="term" value="F:haptoglobin binding"/>
    <property type="evidence" value="ECO:0007669"/>
    <property type="project" value="TreeGrafter"/>
</dbReference>
<dbReference type="GO" id="GO:0020037">
    <property type="term" value="F:heme binding"/>
    <property type="evidence" value="ECO:0007669"/>
    <property type="project" value="InterPro"/>
</dbReference>
<dbReference type="GO" id="GO:0031721">
    <property type="term" value="F:hemoglobin alpha binding"/>
    <property type="evidence" value="ECO:0007669"/>
    <property type="project" value="TreeGrafter"/>
</dbReference>
<dbReference type="GO" id="GO:0046872">
    <property type="term" value="F:metal ion binding"/>
    <property type="evidence" value="ECO:0007669"/>
    <property type="project" value="UniProtKB-KW"/>
</dbReference>
<dbReference type="GO" id="GO:0043177">
    <property type="term" value="F:organic acid binding"/>
    <property type="evidence" value="ECO:0007669"/>
    <property type="project" value="TreeGrafter"/>
</dbReference>
<dbReference type="GO" id="GO:0019825">
    <property type="term" value="F:oxygen binding"/>
    <property type="evidence" value="ECO:0007669"/>
    <property type="project" value="InterPro"/>
</dbReference>
<dbReference type="GO" id="GO:0005344">
    <property type="term" value="F:oxygen carrier activity"/>
    <property type="evidence" value="ECO:0007669"/>
    <property type="project" value="UniProtKB-KW"/>
</dbReference>
<dbReference type="GO" id="GO:0004601">
    <property type="term" value="F:peroxidase activity"/>
    <property type="evidence" value="ECO:0007669"/>
    <property type="project" value="TreeGrafter"/>
</dbReference>
<dbReference type="GO" id="GO:0042744">
    <property type="term" value="P:hydrogen peroxide catabolic process"/>
    <property type="evidence" value="ECO:0007669"/>
    <property type="project" value="TreeGrafter"/>
</dbReference>
<dbReference type="CDD" id="cd08925">
    <property type="entry name" value="Hb-beta-like"/>
    <property type="match status" value="1"/>
</dbReference>
<dbReference type="FunFam" id="1.10.490.10:FF:000001">
    <property type="entry name" value="Hemoglobin subunit beta"/>
    <property type="match status" value="1"/>
</dbReference>
<dbReference type="Gene3D" id="1.10.490.10">
    <property type="entry name" value="Globins"/>
    <property type="match status" value="1"/>
</dbReference>
<dbReference type="InterPro" id="IPR000971">
    <property type="entry name" value="Globin"/>
</dbReference>
<dbReference type="InterPro" id="IPR009050">
    <property type="entry name" value="Globin-like_sf"/>
</dbReference>
<dbReference type="InterPro" id="IPR012292">
    <property type="entry name" value="Globin/Proto"/>
</dbReference>
<dbReference type="InterPro" id="IPR002337">
    <property type="entry name" value="Hemoglobin_b"/>
</dbReference>
<dbReference type="InterPro" id="IPR050056">
    <property type="entry name" value="Hemoglobin_oxygen_transport"/>
</dbReference>
<dbReference type="PANTHER" id="PTHR11442">
    <property type="entry name" value="HEMOGLOBIN FAMILY MEMBER"/>
    <property type="match status" value="1"/>
</dbReference>
<dbReference type="PANTHER" id="PTHR11442:SF42">
    <property type="entry name" value="HEMOGLOBIN SUBUNIT BETA"/>
    <property type="match status" value="1"/>
</dbReference>
<dbReference type="Pfam" id="PF00042">
    <property type="entry name" value="Globin"/>
    <property type="match status" value="1"/>
</dbReference>
<dbReference type="PRINTS" id="PR00814">
    <property type="entry name" value="BETAHAEM"/>
</dbReference>
<dbReference type="SUPFAM" id="SSF46458">
    <property type="entry name" value="Globin-like"/>
    <property type="match status" value="1"/>
</dbReference>
<dbReference type="PROSITE" id="PS01033">
    <property type="entry name" value="GLOBIN"/>
    <property type="match status" value="1"/>
</dbReference>
<reference key="1">
    <citation type="journal article" date="1988" name="Biol. Chem. Hoppe-Seyler">
        <title>Carnivora: primary structure of the hemoglobins from ratel (Mellivora capensis).</title>
        <authorList>
            <person name="Rodewald K."/>
            <person name="Braunitzer G."/>
            <person name="Goeltenboth R."/>
        </authorList>
    </citation>
    <scope>PROTEIN SEQUENCE</scope>
</reference>
<keyword id="KW-0007">Acetylation</keyword>
<keyword id="KW-0903">Direct protein sequencing</keyword>
<keyword id="KW-0349">Heme</keyword>
<keyword id="KW-0408">Iron</keyword>
<keyword id="KW-0479">Metal-binding</keyword>
<keyword id="KW-0561">Oxygen transport</keyword>
<keyword id="KW-0597">Phosphoprotein</keyword>
<keyword id="KW-0702">S-nitrosylation</keyword>
<keyword id="KW-0813">Transport</keyword>
<comment type="function">
    <text>Involved in oxygen transport from the lung to the various peripheral tissues.</text>
</comment>
<comment type="subunit">
    <text>Heterotetramer of two alpha chains and two beta chains.</text>
</comment>
<comment type="tissue specificity">
    <text>Red blood cells.</text>
</comment>
<comment type="similarity">
    <text evidence="3">Belongs to the globin family.</text>
</comment>